<dbReference type="EMBL" id="AAFI02000055">
    <property type="protein sequence ID" value="EAL65667.1"/>
    <property type="molecule type" value="Genomic_DNA"/>
</dbReference>
<dbReference type="RefSeq" id="XP_639029.1">
    <property type="nucleotide sequence ID" value="XM_633937.1"/>
</dbReference>
<dbReference type="FunCoup" id="Q54QV5">
    <property type="interactions" value="22"/>
</dbReference>
<dbReference type="STRING" id="44689.Q54QV5"/>
<dbReference type="GlyCosmos" id="Q54QV5">
    <property type="glycosylation" value="1 site, No reported glycans"/>
</dbReference>
<dbReference type="GlyGen" id="Q54QV5">
    <property type="glycosylation" value="1 site"/>
</dbReference>
<dbReference type="PaxDb" id="44689-DDB0231823"/>
<dbReference type="EnsemblProtists" id="EAL65667">
    <property type="protein sequence ID" value="EAL65667"/>
    <property type="gene ID" value="DDB_G0283579"/>
</dbReference>
<dbReference type="GeneID" id="8624157"/>
<dbReference type="KEGG" id="ddi:DDB_G0283579"/>
<dbReference type="dictyBase" id="DDB_G0283579">
    <property type="gene designation" value="crlD"/>
</dbReference>
<dbReference type="VEuPathDB" id="AmoebaDB:DDB_G0283579"/>
<dbReference type="eggNOG" id="ENOG502S5I8">
    <property type="taxonomic scope" value="Eukaryota"/>
</dbReference>
<dbReference type="HOGENOM" id="CLU_581951_0_0_1"/>
<dbReference type="InParanoid" id="Q54QV5"/>
<dbReference type="OMA" id="CIATHIY"/>
<dbReference type="PRO" id="PR:Q54QV5"/>
<dbReference type="Proteomes" id="UP000002195">
    <property type="component" value="Chromosome 4"/>
</dbReference>
<dbReference type="GO" id="GO:0005886">
    <property type="term" value="C:plasma membrane"/>
    <property type="evidence" value="ECO:0000318"/>
    <property type="project" value="GO_Central"/>
</dbReference>
<dbReference type="GO" id="GO:0004930">
    <property type="term" value="F:G protein-coupled receptor activity"/>
    <property type="evidence" value="ECO:0000318"/>
    <property type="project" value="GO_Central"/>
</dbReference>
<dbReference type="GO" id="GO:0007189">
    <property type="term" value="P:adenylate cyclase-activating G protein-coupled receptor signaling pathway"/>
    <property type="evidence" value="ECO:0000318"/>
    <property type="project" value="GO_Central"/>
</dbReference>
<dbReference type="Gene3D" id="1.20.1070.10">
    <property type="entry name" value="Rhodopsin 7-helix transmembrane proteins"/>
    <property type="match status" value="1"/>
</dbReference>
<dbReference type="InterPro" id="IPR000276">
    <property type="entry name" value="GPCR_Rhodpsn"/>
</dbReference>
<dbReference type="InterPro" id="IPR017452">
    <property type="entry name" value="GPCR_Rhodpsn_7TM"/>
</dbReference>
<dbReference type="PANTHER" id="PTHR23112:SF5">
    <property type="entry name" value="CYCLIC AMP RECEPTOR-LIKE PROTEIN D"/>
    <property type="match status" value="1"/>
</dbReference>
<dbReference type="PANTHER" id="PTHR23112">
    <property type="entry name" value="G PROTEIN-COUPLED RECEPTOR 157-RELATED"/>
    <property type="match status" value="1"/>
</dbReference>
<dbReference type="PRINTS" id="PR00237">
    <property type="entry name" value="GPCRRHODOPSN"/>
</dbReference>
<dbReference type="SUPFAM" id="SSF81321">
    <property type="entry name" value="Family A G protein-coupled receptor-like"/>
    <property type="match status" value="1"/>
</dbReference>
<name>CRLD_DICDI</name>
<organism>
    <name type="scientific">Dictyostelium discoideum</name>
    <name type="common">Social amoeba</name>
    <dbReference type="NCBI Taxonomy" id="44689"/>
    <lineage>
        <taxon>Eukaryota</taxon>
        <taxon>Amoebozoa</taxon>
        <taxon>Evosea</taxon>
        <taxon>Eumycetozoa</taxon>
        <taxon>Dictyostelia</taxon>
        <taxon>Dictyosteliales</taxon>
        <taxon>Dictyosteliaceae</taxon>
        <taxon>Dictyostelium</taxon>
    </lineage>
</organism>
<protein>
    <recommendedName>
        <fullName>Cyclic AMP receptor-like protein D</fullName>
    </recommendedName>
</protein>
<feature type="chain" id="PRO_0000371350" description="Cyclic AMP receptor-like protein D">
    <location>
        <begin position="1"/>
        <end position="470"/>
    </location>
</feature>
<feature type="topological domain" description="Extracellular" evidence="2">
    <location>
        <begin position="1"/>
        <end position="16"/>
    </location>
</feature>
<feature type="transmembrane region" description="Helical; Name=1" evidence="2">
    <location>
        <begin position="17"/>
        <end position="37"/>
    </location>
</feature>
<feature type="topological domain" description="Cytoplasmic" evidence="2">
    <location>
        <begin position="38"/>
        <end position="123"/>
    </location>
</feature>
<feature type="transmembrane region" description="Helical; Name=2" evidence="2">
    <location>
        <begin position="124"/>
        <end position="144"/>
    </location>
</feature>
<feature type="topological domain" description="Extracellular" evidence="2">
    <location>
        <begin position="145"/>
        <end position="176"/>
    </location>
</feature>
<feature type="transmembrane region" description="Helical; Name=3" evidence="2">
    <location>
        <begin position="177"/>
        <end position="197"/>
    </location>
</feature>
<feature type="topological domain" description="Cytoplasmic" evidence="2">
    <location>
        <begin position="198"/>
        <end position="253"/>
    </location>
</feature>
<feature type="transmembrane region" description="Helical; Name=4" evidence="2">
    <location>
        <begin position="254"/>
        <end position="274"/>
    </location>
</feature>
<feature type="topological domain" description="Extracellular" evidence="2">
    <location>
        <begin position="275"/>
        <end position="295"/>
    </location>
</feature>
<feature type="transmembrane region" description="Helical; Name=5" evidence="2">
    <location>
        <begin position="296"/>
        <end position="316"/>
    </location>
</feature>
<feature type="topological domain" description="Cytoplasmic" evidence="2">
    <location>
        <begin position="317"/>
        <end position="342"/>
    </location>
</feature>
<feature type="transmembrane region" description="Helical; Name=6" evidence="2">
    <location>
        <begin position="343"/>
        <end position="363"/>
    </location>
</feature>
<feature type="topological domain" description="Extracellular" evidence="2">
    <location>
        <begin position="364"/>
        <end position="372"/>
    </location>
</feature>
<feature type="transmembrane region" description="Helical; Name=7" evidence="2">
    <location>
        <begin position="373"/>
        <end position="393"/>
    </location>
</feature>
<feature type="topological domain" description="Cytoplasmic" evidence="2">
    <location>
        <begin position="394"/>
        <end position="470"/>
    </location>
</feature>
<feature type="glycosylation site" description="N-linked (GlcNAc...) asparagine" evidence="2">
    <location>
        <position position="162"/>
    </location>
</feature>
<feature type="disulfide bond" evidence="1">
    <location>
        <begin position="172"/>
        <end position="287"/>
    </location>
</feature>
<evidence type="ECO:0000250" key="1"/>
<evidence type="ECO:0000255" key="2"/>
<evidence type="ECO:0000305" key="3"/>
<comment type="function">
    <text evidence="1">Receptor for cAMP.</text>
</comment>
<comment type="subcellular location">
    <subcellularLocation>
        <location evidence="3">Membrane</location>
        <topology evidence="3">Multi-pass membrane protein</topology>
    </subcellularLocation>
</comment>
<comment type="similarity">
    <text evidence="3">Belongs to the G-protein coupled receptor 5 family.</text>
</comment>
<reference key="1">
    <citation type="journal article" date="2005" name="Nature">
        <title>The genome of the social amoeba Dictyostelium discoideum.</title>
        <authorList>
            <person name="Eichinger L."/>
            <person name="Pachebat J.A."/>
            <person name="Gloeckner G."/>
            <person name="Rajandream M.A."/>
            <person name="Sucgang R."/>
            <person name="Berriman M."/>
            <person name="Song J."/>
            <person name="Olsen R."/>
            <person name="Szafranski K."/>
            <person name="Xu Q."/>
            <person name="Tunggal B."/>
            <person name="Kummerfeld S."/>
            <person name="Madera M."/>
            <person name="Konfortov B.A."/>
            <person name="Rivero F."/>
            <person name="Bankier A.T."/>
            <person name="Lehmann R."/>
            <person name="Hamlin N."/>
            <person name="Davies R."/>
            <person name="Gaudet P."/>
            <person name="Fey P."/>
            <person name="Pilcher K."/>
            <person name="Chen G."/>
            <person name="Saunders D."/>
            <person name="Sodergren E.J."/>
            <person name="Davis P."/>
            <person name="Kerhornou A."/>
            <person name="Nie X."/>
            <person name="Hall N."/>
            <person name="Anjard C."/>
            <person name="Hemphill L."/>
            <person name="Bason N."/>
            <person name="Farbrother P."/>
            <person name="Desany B."/>
            <person name="Just E."/>
            <person name="Morio T."/>
            <person name="Rost R."/>
            <person name="Churcher C.M."/>
            <person name="Cooper J."/>
            <person name="Haydock S."/>
            <person name="van Driessche N."/>
            <person name="Cronin A."/>
            <person name="Goodhead I."/>
            <person name="Muzny D.M."/>
            <person name="Mourier T."/>
            <person name="Pain A."/>
            <person name="Lu M."/>
            <person name="Harper D."/>
            <person name="Lindsay R."/>
            <person name="Hauser H."/>
            <person name="James K.D."/>
            <person name="Quiles M."/>
            <person name="Madan Babu M."/>
            <person name="Saito T."/>
            <person name="Buchrieser C."/>
            <person name="Wardroper A."/>
            <person name="Felder M."/>
            <person name="Thangavelu M."/>
            <person name="Johnson D."/>
            <person name="Knights A."/>
            <person name="Loulseged H."/>
            <person name="Mungall K.L."/>
            <person name="Oliver K."/>
            <person name="Price C."/>
            <person name="Quail M.A."/>
            <person name="Urushihara H."/>
            <person name="Hernandez J."/>
            <person name="Rabbinowitsch E."/>
            <person name="Steffen D."/>
            <person name="Sanders M."/>
            <person name="Ma J."/>
            <person name="Kohara Y."/>
            <person name="Sharp S."/>
            <person name="Simmonds M.N."/>
            <person name="Spiegler S."/>
            <person name="Tivey A."/>
            <person name="Sugano S."/>
            <person name="White B."/>
            <person name="Walker D."/>
            <person name="Woodward J.R."/>
            <person name="Winckler T."/>
            <person name="Tanaka Y."/>
            <person name="Shaulsky G."/>
            <person name="Schleicher M."/>
            <person name="Weinstock G.M."/>
            <person name="Rosenthal A."/>
            <person name="Cox E.C."/>
            <person name="Chisholm R.L."/>
            <person name="Gibbs R.A."/>
            <person name="Loomis W.F."/>
            <person name="Platzer M."/>
            <person name="Kay R.R."/>
            <person name="Williams J.G."/>
            <person name="Dear P.H."/>
            <person name="Noegel A.A."/>
            <person name="Barrell B.G."/>
            <person name="Kuspa A."/>
        </authorList>
    </citation>
    <scope>NUCLEOTIDE SEQUENCE [LARGE SCALE GENOMIC DNA]</scope>
    <source>
        <strain>AX4</strain>
    </source>
</reference>
<reference key="2">
    <citation type="journal article" date="2006" name="Eur. J. Cell Biol.">
        <title>The Dictyostelium repertoire of seven transmembrane domain receptors.</title>
        <authorList>
            <person name="Prabhu Y."/>
            <person name="Eichinger L."/>
        </authorList>
    </citation>
    <scope>NOMENCLATURE</scope>
</reference>
<keyword id="KW-1015">Disulfide bond</keyword>
<keyword id="KW-0297">G-protein coupled receptor</keyword>
<keyword id="KW-0325">Glycoprotein</keyword>
<keyword id="KW-0472">Membrane</keyword>
<keyword id="KW-0675">Receptor</keyword>
<keyword id="KW-1185">Reference proteome</keyword>
<keyword id="KW-0807">Transducer</keyword>
<keyword id="KW-0812">Transmembrane</keyword>
<keyword id="KW-1133">Transmembrane helix</keyword>
<sequence>MSSCSSLSMDDRVKIGYGSIAGASLSIIGSIGTIILIKIRNKKQEKKLLIQRKQQLSINNLNINSGSSSNIITISNSTTSLSSNNLNIQPPSFPSYSPLPTSISLSNNNNNNKNNNQKTKVSHFIINLSIANLLASIFMITIKLMMIHFNDKFIKVLPSTANHSFNALISVCTIGNGVIGFSFISTFFWTLAISMYIYQQFLSSSTINSNNNNNNINNINNNNNNNINNINNSKNNNSINNFNNSNKSNKIIKMLFYFVCWVIPFVLGSILVSGSRLIELNSDLPWCSIDSNIQLISFYFPLIICLLATTFFTILIKYKFSNDKLACSSSSLINLQSKIIQRLILFLIVILVCWVPSLISFFISFFSKNCKQFLWLEIISSTIQSCQGILNFLSYLSIFKKLKLYFKNLKKKFNNNNSNNSNNSNNNNSNNFNGGGIFYSKGKKVNNQNSNNFYFTFSTFDFDNNQIQEK</sequence>
<accession>Q54QV5</accession>
<gene>
    <name type="primary">crlD</name>
    <name type="ORF">DDB_G0283579</name>
</gene>
<proteinExistence type="inferred from homology"/>